<protein>
    <recommendedName>
        <fullName>Uncharacterized protein MJ1213</fullName>
    </recommendedName>
</protein>
<dbReference type="EMBL" id="L77117">
    <property type="protein sequence ID" value="AAB99223.1"/>
    <property type="molecule type" value="Genomic_DNA"/>
</dbReference>
<dbReference type="PIR" id="D64451">
    <property type="entry name" value="D64451"/>
</dbReference>
<dbReference type="RefSeq" id="WP_010870725.1">
    <property type="nucleotide sequence ID" value="NC_000909.1"/>
</dbReference>
<dbReference type="PDB" id="4QHF">
    <property type="method" value="X-ray"/>
    <property type="resolution" value="2.10 A"/>
    <property type="chains" value="A=1-110"/>
</dbReference>
<dbReference type="PDB" id="4QHG">
    <property type="method" value="X-ray"/>
    <property type="resolution" value="2.20 A"/>
    <property type="chains" value="A=1-110"/>
</dbReference>
<dbReference type="PDB" id="4QHH">
    <property type="method" value="X-ray"/>
    <property type="resolution" value="3.00 A"/>
    <property type="chains" value="A=1-110"/>
</dbReference>
<dbReference type="PDB" id="4QHI">
    <property type="method" value="X-ray"/>
    <property type="resolution" value="2.30 A"/>
    <property type="chains" value="A/B/C/D=1-110"/>
</dbReference>
<dbReference type="PDB" id="4QHJ">
    <property type="method" value="X-ray"/>
    <property type="resolution" value="1.75 A"/>
    <property type="chains" value="A/B=1-110"/>
</dbReference>
<dbReference type="PDBsum" id="4QHF"/>
<dbReference type="PDBsum" id="4QHG"/>
<dbReference type="PDBsum" id="4QHH"/>
<dbReference type="PDBsum" id="4QHI"/>
<dbReference type="PDBsum" id="4QHJ"/>
<dbReference type="SMR" id="Q58610"/>
<dbReference type="STRING" id="243232.MJ_1213"/>
<dbReference type="PaxDb" id="243232-MJ_1213"/>
<dbReference type="EnsemblBacteria" id="AAB99223">
    <property type="protein sequence ID" value="AAB99223"/>
    <property type="gene ID" value="MJ_1213"/>
</dbReference>
<dbReference type="GeneID" id="1452109"/>
<dbReference type="KEGG" id="mja:MJ_1213"/>
<dbReference type="eggNOG" id="arCOG09626">
    <property type="taxonomic scope" value="Archaea"/>
</dbReference>
<dbReference type="HOGENOM" id="CLU_2067800_0_0_2"/>
<dbReference type="InParanoid" id="Q58610"/>
<dbReference type="OrthoDB" id="308128at2157"/>
<dbReference type="EvolutionaryTrace" id="Q58610"/>
<dbReference type="Proteomes" id="UP000000805">
    <property type="component" value="Chromosome"/>
</dbReference>
<dbReference type="Gene3D" id="3.30.2010.10">
    <property type="entry name" value="Metalloproteases ('zincins'), catalytic domain"/>
    <property type="match status" value="1"/>
</dbReference>
<dbReference type="InterPro" id="IPR008756">
    <property type="entry name" value="Peptidase_M56"/>
</dbReference>
<dbReference type="Pfam" id="PF05569">
    <property type="entry name" value="Peptidase_M56"/>
    <property type="match status" value="1"/>
</dbReference>
<organism>
    <name type="scientific">Methanocaldococcus jannaschii (strain ATCC 43067 / DSM 2661 / JAL-1 / JCM 10045 / NBRC 100440)</name>
    <name type="common">Methanococcus jannaschii</name>
    <dbReference type="NCBI Taxonomy" id="243232"/>
    <lineage>
        <taxon>Archaea</taxon>
        <taxon>Methanobacteriati</taxon>
        <taxon>Methanobacteriota</taxon>
        <taxon>Methanomada group</taxon>
        <taxon>Methanococci</taxon>
        <taxon>Methanococcales</taxon>
        <taxon>Methanocaldococcaceae</taxon>
        <taxon>Methanocaldococcus</taxon>
    </lineage>
</organism>
<keyword id="KW-0002">3D-structure</keyword>
<keyword id="KW-1185">Reference proteome</keyword>
<comment type="similarity">
    <text evidence="1">To M.jannaschii MJ0123 and A.aeolicus AA15.</text>
</comment>
<reference key="1">
    <citation type="journal article" date="1996" name="Science">
        <title>Complete genome sequence of the methanogenic archaeon, Methanococcus jannaschii.</title>
        <authorList>
            <person name="Bult C.J."/>
            <person name="White O."/>
            <person name="Olsen G.J."/>
            <person name="Zhou L."/>
            <person name="Fleischmann R.D."/>
            <person name="Sutton G.G."/>
            <person name="Blake J.A."/>
            <person name="FitzGerald L.M."/>
            <person name="Clayton R.A."/>
            <person name="Gocayne J.D."/>
            <person name="Kerlavage A.R."/>
            <person name="Dougherty B.A."/>
            <person name="Tomb J.-F."/>
            <person name="Adams M.D."/>
            <person name="Reich C.I."/>
            <person name="Overbeek R."/>
            <person name="Kirkness E.F."/>
            <person name="Weinstock K.G."/>
            <person name="Merrick J.M."/>
            <person name="Glodek A."/>
            <person name="Scott J.L."/>
            <person name="Geoghagen N.S.M."/>
            <person name="Weidman J.F."/>
            <person name="Fuhrmann J.L."/>
            <person name="Nguyen D."/>
            <person name="Utterback T.R."/>
            <person name="Kelley J.M."/>
            <person name="Peterson J.D."/>
            <person name="Sadow P.W."/>
            <person name="Hanna M.C."/>
            <person name="Cotton M.D."/>
            <person name="Roberts K.M."/>
            <person name="Hurst M.A."/>
            <person name="Kaine B.P."/>
            <person name="Borodovsky M."/>
            <person name="Klenk H.-P."/>
            <person name="Fraser C.M."/>
            <person name="Smith H.O."/>
            <person name="Woese C.R."/>
            <person name="Venter J.C."/>
        </authorList>
    </citation>
    <scope>NUCLEOTIDE SEQUENCE [LARGE SCALE GENOMIC DNA]</scope>
    <source>
        <strain>ATCC 43067 / DSM 2661 / JAL-1 / JCM 10045 / NBRC 100440</strain>
    </source>
</reference>
<evidence type="ECO:0000305" key="1"/>
<evidence type="ECO:0007829" key="2">
    <source>
        <dbReference type="PDB" id="4QHG"/>
    </source>
</evidence>
<evidence type="ECO:0007829" key="3">
    <source>
        <dbReference type="PDB" id="4QHJ"/>
    </source>
</evidence>
<proteinExistence type="evidence at protein level"/>
<gene>
    <name type="ordered locus">MJ1213</name>
</gene>
<name>Y1213_METJA</name>
<sequence length="110" mass="13080">MKDRKILNEILSNTINELNLNDKKANIKIKIKPLKRKIASISLTNKTIYINKNILPYLSDEEIRFILAHELLHLKYGKYHINEFEEELLFLFPNKEAILINLINKLHQKK</sequence>
<feature type="chain" id="PRO_0000107216" description="Uncharacterized protein MJ1213">
    <location>
        <begin position="1"/>
        <end position="110"/>
    </location>
</feature>
<feature type="helix" evidence="3">
    <location>
        <begin position="4"/>
        <end position="17"/>
    </location>
</feature>
<feature type="helix" evidence="3">
    <location>
        <begin position="21"/>
        <end position="23"/>
    </location>
</feature>
<feature type="turn" evidence="3">
    <location>
        <begin position="24"/>
        <end position="26"/>
    </location>
</feature>
<feature type="strand" evidence="3">
    <location>
        <begin position="28"/>
        <end position="32"/>
    </location>
</feature>
<feature type="strand" evidence="3">
    <location>
        <begin position="38"/>
        <end position="42"/>
    </location>
</feature>
<feature type="turn" evidence="3">
    <location>
        <begin position="43"/>
        <end position="46"/>
    </location>
</feature>
<feature type="strand" evidence="3">
    <location>
        <begin position="47"/>
        <end position="51"/>
    </location>
</feature>
<feature type="turn" evidence="3">
    <location>
        <begin position="52"/>
        <end position="54"/>
    </location>
</feature>
<feature type="helix" evidence="3">
    <location>
        <begin position="55"/>
        <end position="57"/>
    </location>
</feature>
<feature type="helix" evidence="3">
    <location>
        <begin position="60"/>
        <end position="76"/>
    </location>
</feature>
<feature type="helix" evidence="2">
    <location>
        <begin position="78"/>
        <end position="80"/>
    </location>
</feature>
<feature type="helix" evidence="3">
    <location>
        <begin position="82"/>
        <end position="91"/>
    </location>
</feature>
<feature type="helix" evidence="3">
    <location>
        <begin position="95"/>
        <end position="106"/>
    </location>
</feature>
<accession>Q58610</accession>